<gene>
    <name evidence="1" type="primary">fadB</name>
    <name type="ordered locus">YPK_3933</name>
</gene>
<comment type="function">
    <text evidence="1">Involved in the aerobic and anaerobic degradation of long-chain fatty acids via beta-oxidation cycle. Catalyzes the formation of 3-oxoacyl-CoA from enoyl-CoA via L-3-hydroxyacyl-CoA. It can also use D-3-hydroxyacyl-CoA and cis-3-enoyl-CoA as substrate.</text>
</comment>
<comment type="catalytic activity">
    <reaction evidence="1">
        <text>a (3S)-3-hydroxyacyl-CoA + NAD(+) = a 3-oxoacyl-CoA + NADH + H(+)</text>
        <dbReference type="Rhea" id="RHEA:22432"/>
        <dbReference type="ChEBI" id="CHEBI:15378"/>
        <dbReference type="ChEBI" id="CHEBI:57318"/>
        <dbReference type="ChEBI" id="CHEBI:57540"/>
        <dbReference type="ChEBI" id="CHEBI:57945"/>
        <dbReference type="ChEBI" id="CHEBI:90726"/>
        <dbReference type="EC" id="1.1.1.35"/>
    </reaction>
</comment>
<comment type="catalytic activity">
    <reaction evidence="1">
        <text>a (3S)-3-hydroxyacyl-CoA = a (2E)-enoyl-CoA + H2O</text>
        <dbReference type="Rhea" id="RHEA:16105"/>
        <dbReference type="ChEBI" id="CHEBI:15377"/>
        <dbReference type="ChEBI" id="CHEBI:57318"/>
        <dbReference type="ChEBI" id="CHEBI:58856"/>
        <dbReference type="EC" id="4.2.1.17"/>
    </reaction>
</comment>
<comment type="catalytic activity">
    <reaction evidence="1">
        <text>a 4-saturated-(3S)-3-hydroxyacyl-CoA = a (3E)-enoyl-CoA + H2O</text>
        <dbReference type="Rhea" id="RHEA:20724"/>
        <dbReference type="ChEBI" id="CHEBI:15377"/>
        <dbReference type="ChEBI" id="CHEBI:58521"/>
        <dbReference type="ChEBI" id="CHEBI:137480"/>
        <dbReference type="EC" id="4.2.1.17"/>
    </reaction>
</comment>
<comment type="catalytic activity">
    <reaction evidence="1">
        <text>(3S)-3-hydroxybutanoyl-CoA = (3R)-3-hydroxybutanoyl-CoA</text>
        <dbReference type="Rhea" id="RHEA:21760"/>
        <dbReference type="ChEBI" id="CHEBI:57315"/>
        <dbReference type="ChEBI" id="CHEBI:57316"/>
        <dbReference type="EC" id="5.1.2.3"/>
    </reaction>
</comment>
<comment type="catalytic activity">
    <reaction evidence="1">
        <text>a (3Z)-enoyl-CoA = a 4-saturated (2E)-enoyl-CoA</text>
        <dbReference type="Rhea" id="RHEA:45900"/>
        <dbReference type="ChEBI" id="CHEBI:85097"/>
        <dbReference type="ChEBI" id="CHEBI:85489"/>
        <dbReference type="EC" id="5.3.3.8"/>
    </reaction>
</comment>
<comment type="catalytic activity">
    <reaction evidence="1">
        <text>a (3E)-enoyl-CoA = a 4-saturated (2E)-enoyl-CoA</text>
        <dbReference type="Rhea" id="RHEA:45228"/>
        <dbReference type="ChEBI" id="CHEBI:58521"/>
        <dbReference type="ChEBI" id="CHEBI:85097"/>
        <dbReference type="EC" id="5.3.3.8"/>
    </reaction>
</comment>
<comment type="pathway">
    <text evidence="1">Lipid metabolism; fatty acid beta-oxidation.</text>
</comment>
<comment type="subunit">
    <text evidence="1">Heterotetramer of two alpha chains (FadB) and two beta chains (FadA).</text>
</comment>
<comment type="similarity">
    <text evidence="1">In the N-terminal section; belongs to the enoyl-CoA hydratase/isomerase family.</text>
</comment>
<comment type="similarity">
    <text evidence="1">In the C-terminal section; belongs to the 3-hydroxyacyl-CoA dehydrogenase family.</text>
</comment>
<proteinExistence type="inferred from homology"/>
<sequence>MLYQSETLQLHWLENGIAELVFDAPGSVNKLDTKTVANLGEALNVLEKQSELKGLLLRSAKTALIVGADITEFLSLFNAPPEKLHQWLVFANTIFNRLEDLPVPTISAINGYALGGGCECILATDFRIASPEARIGLPETKLGIMPGFGGSVRLPRLLGADSALEIIATGKDVTANDALKIGLVDAVVDPEKLVGSALTMLKQAIDGKLDWQAARRPKLEPLKLNPTEAAMCFTIAKGRVMQVAGKHYPAPLTAVKTIEAAAKFGRTEALNLETNSFVPLAGSNEARALVGIFLNDQYVKAQAKKLSKGVAAPKLAAVLGAGIMGGGIAYQSALKSVPVIMKDINENSLDLGMNEAAKLLNKQLERGKVDGLKMASILATIRPTLDYAGIERAQVIVEAVVENPKVKAAVLAEVEALIGEDTVLASNTSTIPIDQLAKSLKRPENFCGMHFFNPVHRMPLVEIIRGAKTSDKTLAAVVAYATQMGKTPIVVNDCPGFFVNRVLFPYLAGFGMLVRDGGDFHQIDKVMEKQFGWPMGPAYLLDVVGIDTAHHAQAVMAAGFPERMNKDYRDAVDVMFDNQRFGQKNGQGFYRYTQDAKGKPRKENDEQVDKLLAEISQPLQEFSDEDIIARTMIPMINEVVRCLEEGIIASAAEGDMALVYGLGFPPFHGGVFRYLDTLGSANYVEMAQRYAHLGALYHVPAGLRAKAEHNESYYPVAAALLDVSTNQPA</sequence>
<evidence type="ECO:0000255" key="1">
    <source>
        <dbReference type="HAMAP-Rule" id="MF_01621"/>
    </source>
</evidence>
<accession>B1JP63</accession>
<protein>
    <recommendedName>
        <fullName evidence="1">Fatty acid oxidation complex subunit alpha</fullName>
    </recommendedName>
    <domain>
        <recommendedName>
            <fullName evidence="1">Enoyl-CoA hydratase/Delta(3)-cis-Delta(2)-trans-enoyl-CoA isomerase/3-hydroxybutyryl-CoA epimerase</fullName>
            <ecNumber evidence="1">4.2.1.17</ecNumber>
            <ecNumber evidence="1">5.1.2.3</ecNumber>
            <ecNumber evidence="1">5.3.3.8</ecNumber>
        </recommendedName>
    </domain>
    <domain>
        <recommendedName>
            <fullName evidence="1">3-hydroxyacyl-CoA dehydrogenase</fullName>
            <ecNumber evidence="1">1.1.1.35</ecNumber>
        </recommendedName>
    </domain>
</protein>
<organism>
    <name type="scientific">Yersinia pseudotuberculosis serotype O:3 (strain YPIII)</name>
    <dbReference type="NCBI Taxonomy" id="502800"/>
    <lineage>
        <taxon>Bacteria</taxon>
        <taxon>Pseudomonadati</taxon>
        <taxon>Pseudomonadota</taxon>
        <taxon>Gammaproteobacteria</taxon>
        <taxon>Enterobacterales</taxon>
        <taxon>Yersiniaceae</taxon>
        <taxon>Yersinia</taxon>
    </lineage>
</organism>
<reference key="1">
    <citation type="submission" date="2008-02" db="EMBL/GenBank/DDBJ databases">
        <title>Complete sequence of Yersinia pseudotuberculosis YPIII.</title>
        <authorList>
            <consortium name="US DOE Joint Genome Institute"/>
            <person name="Copeland A."/>
            <person name="Lucas S."/>
            <person name="Lapidus A."/>
            <person name="Glavina del Rio T."/>
            <person name="Dalin E."/>
            <person name="Tice H."/>
            <person name="Bruce D."/>
            <person name="Goodwin L."/>
            <person name="Pitluck S."/>
            <person name="Munk A.C."/>
            <person name="Brettin T."/>
            <person name="Detter J.C."/>
            <person name="Han C."/>
            <person name="Tapia R."/>
            <person name="Schmutz J."/>
            <person name="Larimer F."/>
            <person name="Land M."/>
            <person name="Hauser L."/>
            <person name="Challacombe J.F."/>
            <person name="Green L."/>
            <person name="Lindler L.E."/>
            <person name="Nikolich M.P."/>
            <person name="Richardson P."/>
        </authorList>
    </citation>
    <scope>NUCLEOTIDE SEQUENCE [LARGE SCALE GENOMIC DNA]</scope>
    <source>
        <strain>YPIII</strain>
    </source>
</reference>
<feature type="chain" id="PRO_1000186062" description="Fatty acid oxidation complex subunit alpha">
    <location>
        <begin position="1"/>
        <end position="729"/>
    </location>
</feature>
<feature type="region of interest" description="Enoyl-CoA hydratase/isomerase" evidence="1">
    <location>
        <begin position="1"/>
        <end position="189"/>
    </location>
</feature>
<feature type="region of interest" description="3-hydroxyacyl-CoA dehydrogenase" evidence="1">
    <location>
        <begin position="311"/>
        <end position="729"/>
    </location>
</feature>
<feature type="active site" description="For 3-hydroxyacyl-CoA dehydrogenase activity" evidence="1">
    <location>
        <position position="450"/>
    </location>
</feature>
<feature type="binding site" evidence="1">
    <location>
        <position position="296"/>
    </location>
    <ligand>
        <name>substrate</name>
    </ligand>
</feature>
<feature type="binding site" evidence="1">
    <location>
        <position position="324"/>
    </location>
    <ligand>
        <name>NAD(+)</name>
        <dbReference type="ChEBI" id="CHEBI:57540"/>
    </ligand>
</feature>
<feature type="binding site" evidence="1">
    <location>
        <position position="343"/>
    </location>
    <ligand>
        <name>NAD(+)</name>
        <dbReference type="ChEBI" id="CHEBI:57540"/>
    </ligand>
</feature>
<feature type="binding site" evidence="1">
    <location>
        <begin position="400"/>
        <end position="402"/>
    </location>
    <ligand>
        <name>NAD(+)</name>
        <dbReference type="ChEBI" id="CHEBI:57540"/>
    </ligand>
</feature>
<feature type="binding site" evidence="1">
    <location>
        <position position="407"/>
    </location>
    <ligand>
        <name>NAD(+)</name>
        <dbReference type="ChEBI" id="CHEBI:57540"/>
    </ligand>
</feature>
<feature type="binding site" evidence="1">
    <location>
        <position position="429"/>
    </location>
    <ligand>
        <name>NAD(+)</name>
        <dbReference type="ChEBI" id="CHEBI:57540"/>
    </ligand>
</feature>
<feature type="binding site" evidence="1">
    <location>
        <position position="453"/>
    </location>
    <ligand>
        <name>NAD(+)</name>
        <dbReference type="ChEBI" id="CHEBI:57540"/>
    </ligand>
</feature>
<feature type="binding site" evidence="1">
    <location>
        <position position="500"/>
    </location>
    <ligand>
        <name>substrate</name>
    </ligand>
</feature>
<feature type="binding site" evidence="1">
    <location>
        <position position="660"/>
    </location>
    <ligand>
        <name>substrate</name>
    </ligand>
</feature>
<feature type="site" description="Important for catalytic activity" evidence="1">
    <location>
        <position position="119"/>
    </location>
</feature>
<feature type="site" description="Important for catalytic activity" evidence="1">
    <location>
        <position position="139"/>
    </location>
</feature>
<name>FADB_YERPY</name>
<dbReference type="EC" id="4.2.1.17" evidence="1"/>
<dbReference type="EC" id="5.1.2.3" evidence="1"/>
<dbReference type="EC" id="5.3.3.8" evidence="1"/>
<dbReference type="EC" id="1.1.1.35" evidence="1"/>
<dbReference type="EMBL" id="CP000950">
    <property type="protein sequence ID" value="ACA70196.1"/>
    <property type="molecule type" value="Genomic_DNA"/>
</dbReference>
<dbReference type="RefSeq" id="WP_002211546.1">
    <property type="nucleotide sequence ID" value="NZ_CP009792.1"/>
</dbReference>
<dbReference type="SMR" id="B1JP63"/>
<dbReference type="GeneID" id="57974942"/>
<dbReference type="KEGG" id="ypy:YPK_3933"/>
<dbReference type="PATRIC" id="fig|502800.11.peg.282"/>
<dbReference type="UniPathway" id="UPA00659"/>
<dbReference type="GO" id="GO:0036125">
    <property type="term" value="C:fatty acid beta-oxidation multienzyme complex"/>
    <property type="evidence" value="ECO:0007669"/>
    <property type="project" value="InterPro"/>
</dbReference>
<dbReference type="GO" id="GO:0008692">
    <property type="term" value="F:3-hydroxybutyryl-CoA epimerase activity"/>
    <property type="evidence" value="ECO:0007669"/>
    <property type="project" value="UniProtKB-UniRule"/>
</dbReference>
<dbReference type="GO" id="GO:0004165">
    <property type="term" value="F:delta(3)-delta(2)-enoyl-CoA isomerase activity"/>
    <property type="evidence" value="ECO:0007669"/>
    <property type="project" value="UniProtKB-UniRule"/>
</dbReference>
<dbReference type="GO" id="GO:0004300">
    <property type="term" value="F:enoyl-CoA hydratase activity"/>
    <property type="evidence" value="ECO:0007669"/>
    <property type="project" value="UniProtKB-UniRule"/>
</dbReference>
<dbReference type="GO" id="GO:0016509">
    <property type="term" value="F:long-chain-3-hydroxyacyl-CoA dehydrogenase activity"/>
    <property type="evidence" value="ECO:0007669"/>
    <property type="project" value="TreeGrafter"/>
</dbReference>
<dbReference type="GO" id="GO:0070403">
    <property type="term" value="F:NAD+ binding"/>
    <property type="evidence" value="ECO:0007669"/>
    <property type="project" value="InterPro"/>
</dbReference>
<dbReference type="GO" id="GO:0006635">
    <property type="term" value="P:fatty acid beta-oxidation"/>
    <property type="evidence" value="ECO:0007669"/>
    <property type="project" value="UniProtKB-UniRule"/>
</dbReference>
<dbReference type="CDD" id="cd06558">
    <property type="entry name" value="crotonase-like"/>
    <property type="match status" value="1"/>
</dbReference>
<dbReference type="FunFam" id="1.10.1040.50:FF:000001">
    <property type="entry name" value="Fatty acid oxidation complex subunit alpha"/>
    <property type="match status" value="1"/>
</dbReference>
<dbReference type="FunFam" id="3.90.226.10:FF:000018">
    <property type="entry name" value="Fatty acid oxidation complex subunit alpha"/>
    <property type="match status" value="1"/>
</dbReference>
<dbReference type="FunFam" id="3.40.50.720:FF:000009">
    <property type="entry name" value="Fatty oxidation complex, alpha subunit"/>
    <property type="match status" value="1"/>
</dbReference>
<dbReference type="Gene3D" id="1.10.1040.50">
    <property type="match status" value="1"/>
</dbReference>
<dbReference type="Gene3D" id="3.90.226.10">
    <property type="entry name" value="2-enoyl-CoA Hydratase, Chain A, domain 1"/>
    <property type="match status" value="1"/>
</dbReference>
<dbReference type="Gene3D" id="3.40.50.720">
    <property type="entry name" value="NAD(P)-binding Rossmann-like Domain"/>
    <property type="match status" value="1"/>
</dbReference>
<dbReference type="HAMAP" id="MF_01621">
    <property type="entry name" value="FadB"/>
    <property type="match status" value="1"/>
</dbReference>
<dbReference type="InterPro" id="IPR006180">
    <property type="entry name" value="3-OHacyl-CoA_DH_CS"/>
</dbReference>
<dbReference type="InterPro" id="IPR006176">
    <property type="entry name" value="3-OHacyl-CoA_DH_NAD-bd"/>
</dbReference>
<dbReference type="InterPro" id="IPR006108">
    <property type="entry name" value="3HC_DH_C"/>
</dbReference>
<dbReference type="InterPro" id="IPR008927">
    <property type="entry name" value="6-PGluconate_DH-like_C_sf"/>
</dbReference>
<dbReference type="InterPro" id="IPR029045">
    <property type="entry name" value="ClpP/crotonase-like_dom_sf"/>
</dbReference>
<dbReference type="InterPro" id="IPR018376">
    <property type="entry name" value="Enoyl-CoA_hyd/isom_CS"/>
</dbReference>
<dbReference type="InterPro" id="IPR001753">
    <property type="entry name" value="Enoyl-CoA_hydra/iso"/>
</dbReference>
<dbReference type="InterPro" id="IPR050136">
    <property type="entry name" value="FA_oxidation_alpha_subunit"/>
</dbReference>
<dbReference type="InterPro" id="IPR012799">
    <property type="entry name" value="FadB"/>
</dbReference>
<dbReference type="InterPro" id="IPR036291">
    <property type="entry name" value="NAD(P)-bd_dom_sf"/>
</dbReference>
<dbReference type="NCBIfam" id="TIGR02437">
    <property type="entry name" value="FadB"/>
    <property type="match status" value="1"/>
</dbReference>
<dbReference type="NCBIfam" id="NF008727">
    <property type="entry name" value="PRK11730.1"/>
    <property type="match status" value="1"/>
</dbReference>
<dbReference type="PANTHER" id="PTHR43612">
    <property type="entry name" value="TRIFUNCTIONAL ENZYME SUBUNIT ALPHA"/>
    <property type="match status" value="1"/>
</dbReference>
<dbReference type="PANTHER" id="PTHR43612:SF3">
    <property type="entry name" value="TRIFUNCTIONAL ENZYME SUBUNIT ALPHA, MITOCHONDRIAL"/>
    <property type="match status" value="1"/>
</dbReference>
<dbReference type="Pfam" id="PF00725">
    <property type="entry name" value="3HCDH"/>
    <property type="match status" value="1"/>
</dbReference>
<dbReference type="Pfam" id="PF02737">
    <property type="entry name" value="3HCDH_N"/>
    <property type="match status" value="1"/>
</dbReference>
<dbReference type="Pfam" id="PF00378">
    <property type="entry name" value="ECH_1"/>
    <property type="match status" value="1"/>
</dbReference>
<dbReference type="SUPFAM" id="SSF48179">
    <property type="entry name" value="6-phosphogluconate dehydrogenase C-terminal domain-like"/>
    <property type="match status" value="2"/>
</dbReference>
<dbReference type="SUPFAM" id="SSF52096">
    <property type="entry name" value="ClpP/crotonase"/>
    <property type="match status" value="1"/>
</dbReference>
<dbReference type="SUPFAM" id="SSF51735">
    <property type="entry name" value="NAD(P)-binding Rossmann-fold domains"/>
    <property type="match status" value="1"/>
</dbReference>
<dbReference type="PROSITE" id="PS00067">
    <property type="entry name" value="3HCDH"/>
    <property type="match status" value="1"/>
</dbReference>
<dbReference type="PROSITE" id="PS00166">
    <property type="entry name" value="ENOYL_COA_HYDRATASE"/>
    <property type="match status" value="1"/>
</dbReference>
<keyword id="KW-0276">Fatty acid metabolism</keyword>
<keyword id="KW-0413">Isomerase</keyword>
<keyword id="KW-0442">Lipid degradation</keyword>
<keyword id="KW-0443">Lipid metabolism</keyword>
<keyword id="KW-0456">Lyase</keyword>
<keyword id="KW-0511">Multifunctional enzyme</keyword>
<keyword id="KW-0520">NAD</keyword>
<keyword id="KW-0560">Oxidoreductase</keyword>